<comment type="function">
    <text evidence="1">E3 ubiquitin protein ligase that is part of an apoptotic signaling pathway activated by endoplasmic reticulum stress. Stimulates the expression of proteins specific of the unfolded protein response (UPR), ubiquitinates BNIP1 and regulates its localization to the mitochondrion and induces calcium release from the endoplasmic reticulum that ultimately leads to cell apoptosis. Plays a role in the maintenance of intestinal homeostasis and clearance of enteric pathogens. Upon NOD2 stimulation, ubiquitinates the ER stress sensor activating transcription factor 6/ATF6 and promotes the unfolded protein response UPR. Participates in basal level of autophagy maintenance by regulating the ubiquitination of EPHB2. Upon stimulation by ligand EFNB1, ubiquitinates EPHB2 and further recruits MAP1LC3B for autophagy induction. Controls nutrient sensing by ubiquitinating Sestrin-2/SESN2, which is an intracellular sensor of cytosolic leucine and inhibitor of mTORC1 activity.</text>
</comment>
<comment type="catalytic activity">
    <reaction evidence="1">
        <text>S-ubiquitinyl-[E2 ubiquitin-conjugating enzyme]-L-cysteine + [acceptor protein]-L-lysine = [E2 ubiquitin-conjugating enzyme]-L-cysteine + N(6)-ubiquitinyl-[acceptor protein]-L-lysine.</text>
        <dbReference type="EC" id="2.3.2.27"/>
    </reaction>
</comment>
<comment type="pathway">
    <text evidence="1">Protein modification; protein ubiquitination.</text>
</comment>
<comment type="subunit">
    <text evidence="1">Interacts with BNIP1.</text>
</comment>
<comment type="subcellular location">
    <subcellularLocation>
        <location evidence="1">Endoplasmic reticulum membrane</location>
        <topology evidence="2">Multi-pass membrane protein</topology>
    </subcellularLocation>
</comment>
<comment type="domain">
    <text evidence="1">The RING-type domain is required for ubiquitination.</text>
</comment>
<comment type="PTM">
    <text evidence="1">Polyubiquitinated. 'Lys-29' autoubiquitination leads to proteasomal degradation.</text>
</comment>
<evidence type="ECO:0000250" key="1">
    <source>
        <dbReference type="UniProtKB" id="Q9NXI6"/>
    </source>
</evidence>
<evidence type="ECO:0000255" key="2"/>
<evidence type="ECO:0000255" key="3">
    <source>
        <dbReference type="PROSITE-ProRule" id="PRU00175"/>
    </source>
</evidence>
<evidence type="ECO:0000256" key="4">
    <source>
        <dbReference type="SAM" id="MobiDB-lite"/>
    </source>
</evidence>
<evidence type="ECO:0000305" key="5"/>
<accession>Q3T0Y9</accession>
<organism>
    <name type="scientific">Bos taurus</name>
    <name type="common">Bovine</name>
    <dbReference type="NCBI Taxonomy" id="9913"/>
    <lineage>
        <taxon>Eukaryota</taxon>
        <taxon>Metazoa</taxon>
        <taxon>Chordata</taxon>
        <taxon>Craniata</taxon>
        <taxon>Vertebrata</taxon>
        <taxon>Euteleostomi</taxon>
        <taxon>Mammalia</taxon>
        <taxon>Eutheria</taxon>
        <taxon>Laurasiatheria</taxon>
        <taxon>Artiodactyla</taxon>
        <taxon>Ruminantia</taxon>
        <taxon>Pecora</taxon>
        <taxon>Bovidae</taxon>
        <taxon>Bovinae</taxon>
        <taxon>Bos</taxon>
    </lineage>
</organism>
<gene>
    <name evidence="1" type="primary">RNF186</name>
</gene>
<name>RN186_BOVIN</name>
<proteinExistence type="evidence at transcript level"/>
<protein>
    <recommendedName>
        <fullName evidence="5">E3 ubiquitin-protein ligase RNF186</fullName>
        <ecNumber evidence="1">2.3.2.27</ecNumber>
    </recommendedName>
    <alternativeName>
        <fullName evidence="1">RING finger protein 186</fullName>
    </alternativeName>
</protein>
<reference key="1">
    <citation type="submission" date="2005-08" db="EMBL/GenBank/DDBJ databases">
        <authorList>
            <consortium name="NIH - Mammalian Gene Collection (MGC) project"/>
        </authorList>
    </citation>
    <scope>NUCLEOTIDE SEQUENCE [LARGE SCALE MRNA]</scope>
    <source>
        <strain>Crossbred X Angus</strain>
        <tissue>Ileum</tissue>
    </source>
</reference>
<dbReference type="EC" id="2.3.2.27" evidence="1"/>
<dbReference type="EMBL" id="BC102202">
    <property type="protein sequence ID" value="AAI02203.1"/>
    <property type="molecule type" value="mRNA"/>
</dbReference>
<dbReference type="RefSeq" id="NP_001030388.1">
    <property type="nucleotide sequence ID" value="NM_001035311.2"/>
</dbReference>
<dbReference type="SMR" id="Q3T0Y9"/>
<dbReference type="FunCoup" id="Q3T0Y9">
    <property type="interactions" value="33"/>
</dbReference>
<dbReference type="STRING" id="9913.ENSBTAP00000040482"/>
<dbReference type="PaxDb" id="9913-ENSBTAP00000040482"/>
<dbReference type="GeneID" id="515529"/>
<dbReference type="KEGG" id="bta:515529"/>
<dbReference type="CTD" id="54546"/>
<dbReference type="eggNOG" id="KOG2177">
    <property type="taxonomic scope" value="Eukaryota"/>
</dbReference>
<dbReference type="InParanoid" id="Q3T0Y9"/>
<dbReference type="OrthoDB" id="252722at2759"/>
<dbReference type="UniPathway" id="UPA00143"/>
<dbReference type="Proteomes" id="UP000009136">
    <property type="component" value="Unplaced"/>
</dbReference>
<dbReference type="GO" id="GO:0005789">
    <property type="term" value="C:endoplasmic reticulum membrane"/>
    <property type="evidence" value="ECO:0000250"/>
    <property type="project" value="UniProtKB"/>
</dbReference>
<dbReference type="GO" id="GO:0061630">
    <property type="term" value="F:ubiquitin protein ligase activity"/>
    <property type="evidence" value="ECO:0000318"/>
    <property type="project" value="GO_Central"/>
</dbReference>
<dbReference type="GO" id="GO:0004842">
    <property type="term" value="F:ubiquitin-protein transferase activity"/>
    <property type="evidence" value="ECO:0000250"/>
    <property type="project" value="UniProtKB"/>
</dbReference>
<dbReference type="GO" id="GO:0008270">
    <property type="term" value="F:zinc ion binding"/>
    <property type="evidence" value="ECO:0007669"/>
    <property type="project" value="UniProtKB-KW"/>
</dbReference>
<dbReference type="GO" id="GO:0070059">
    <property type="term" value="P:intrinsic apoptotic signaling pathway in response to endoplasmic reticulum stress"/>
    <property type="evidence" value="ECO:0000250"/>
    <property type="project" value="UniProtKB"/>
</dbReference>
<dbReference type="GO" id="GO:0043161">
    <property type="term" value="P:proteasome-mediated ubiquitin-dependent protein catabolic process"/>
    <property type="evidence" value="ECO:0000250"/>
    <property type="project" value="UniProtKB"/>
</dbReference>
<dbReference type="GO" id="GO:0051865">
    <property type="term" value="P:protein autoubiquitination"/>
    <property type="evidence" value="ECO:0000250"/>
    <property type="project" value="UniProtKB"/>
</dbReference>
<dbReference type="GO" id="GO:0035519">
    <property type="term" value="P:protein K29-linked ubiquitination"/>
    <property type="evidence" value="ECO:0000250"/>
    <property type="project" value="UniProtKB"/>
</dbReference>
<dbReference type="GO" id="GO:0070534">
    <property type="term" value="P:protein K63-linked ubiquitination"/>
    <property type="evidence" value="ECO:0000250"/>
    <property type="project" value="UniProtKB"/>
</dbReference>
<dbReference type="GO" id="GO:0070585">
    <property type="term" value="P:protein localization to mitochondrion"/>
    <property type="evidence" value="ECO:0000250"/>
    <property type="project" value="UniProtKB"/>
</dbReference>
<dbReference type="FunFam" id="3.30.40.10:FF:000197">
    <property type="entry name" value="E3 ubiquitin-protein ligase RNF152"/>
    <property type="match status" value="1"/>
</dbReference>
<dbReference type="Gene3D" id="3.30.40.10">
    <property type="entry name" value="Zinc/RING finger domain, C3HC4 (zinc finger)"/>
    <property type="match status" value="1"/>
</dbReference>
<dbReference type="InterPro" id="IPR051435">
    <property type="entry name" value="RING_finger_E3_ubiq-ligases"/>
</dbReference>
<dbReference type="InterPro" id="IPR001841">
    <property type="entry name" value="Znf_RING"/>
</dbReference>
<dbReference type="InterPro" id="IPR013083">
    <property type="entry name" value="Znf_RING/FYVE/PHD"/>
</dbReference>
<dbReference type="InterPro" id="IPR017907">
    <property type="entry name" value="Znf_RING_CS"/>
</dbReference>
<dbReference type="PANTHER" id="PTHR22791:SF28">
    <property type="entry name" value="E3 UBIQUITIN-PROTEIN LIGASE RNF186"/>
    <property type="match status" value="1"/>
</dbReference>
<dbReference type="PANTHER" id="PTHR22791">
    <property type="entry name" value="RING-TYPE DOMAIN-CONTAINING PROTEIN"/>
    <property type="match status" value="1"/>
</dbReference>
<dbReference type="Pfam" id="PF14634">
    <property type="entry name" value="zf-RING_5"/>
    <property type="match status" value="1"/>
</dbReference>
<dbReference type="SMART" id="SM00184">
    <property type="entry name" value="RING"/>
    <property type="match status" value="1"/>
</dbReference>
<dbReference type="SUPFAM" id="SSF57850">
    <property type="entry name" value="RING/U-box"/>
    <property type="match status" value="1"/>
</dbReference>
<dbReference type="PROSITE" id="PS00518">
    <property type="entry name" value="ZF_RING_1"/>
    <property type="match status" value="1"/>
</dbReference>
<dbReference type="PROSITE" id="PS50089">
    <property type="entry name" value="ZF_RING_2"/>
    <property type="match status" value="1"/>
</dbReference>
<sequence length="226" mass="24378">MACLEIPQQPQLVCQKATPSDPAGCDGGPGGPTEGDLECLVCREPYSGVRPPKLLGCQHAFCAVCLKLLLCVQDDAWSIPCPLCRKVTAVPGGLVCTLRDQEKVLERLARPGLEVPLRPQGLANPATLTAGQPREAGEEEQDAVTTNRAAARRLAAHLLLLVLLIILILPFIYPGVIRWVLSFLETLALLLALLFCSHPGQQDGCMPTPRTLFCRERKPSEIASIS</sequence>
<keyword id="KW-0256">Endoplasmic reticulum</keyword>
<keyword id="KW-0472">Membrane</keyword>
<keyword id="KW-0479">Metal-binding</keyword>
<keyword id="KW-1185">Reference proteome</keyword>
<keyword id="KW-0808">Transferase</keyword>
<keyword id="KW-0812">Transmembrane</keyword>
<keyword id="KW-1133">Transmembrane helix</keyword>
<keyword id="KW-0832">Ubl conjugation</keyword>
<keyword id="KW-0862">Zinc</keyword>
<keyword id="KW-0863">Zinc-finger</keyword>
<feature type="chain" id="PRO_0000261623" description="E3 ubiquitin-protein ligase RNF186">
    <location>
        <begin position="1"/>
        <end position="226"/>
    </location>
</feature>
<feature type="transmembrane region" description="Helical" evidence="2">
    <location>
        <begin position="157"/>
        <end position="177"/>
    </location>
</feature>
<feature type="transmembrane region" description="Helical" evidence="2">
    <location>
        <begin position="179"/>
        <end position="199"/>
    </location>
</feature>
<feature type="zinc finger region" description="RING-type" evidence="3">
    <location>
        <begin position="39"/>
        <end position="85"/>
    </location>
</feature>
<feature type="region of interest" description="Disordered" evidence="4">
    <location>
        <begin position="121"/>
        <end position="143"/>
    </location>
</feature>